<proteinExistence type="evidence at protein level"/>
<gene>
    <name evidence="10" type="primary">GABRA4</name>
</gene>
<protein>
    <recommendedName>
        <fullName evidence="8">Gamma-aminobutyric acid receptor subunit alpha-4</fullName>
    </recommendedName>
    <alternativeName>
        <fullName evidence="8">GABA(A) receptor subunit alpha-4</fullName>
        <shortName evidence="2">GABAAR subunit alpha-4</shortName>
    </alternativeName>
</protein>
<reference key="1">
    <citation type="journal article" date="1995" name="Eur. J. Pharmacol.">
        <title>Cloning and characterization of the human GABAA receptor alpha 4 subunit: identification of a unique diazepam-insensitive binding site.</title>
        <authorList>
            <person name="Yang W."/>
            <person name="Drewe J.A."/>
            <person name="Lan N.C."/>
        </authorList>
    </citation>
    <scope>NUCLEOTIDE SEQUENCE [MRNA]</scope>
    <scope>INDUCTION</scope>
    <source>
        <tissue>Brain cortex</tissue>
    </source>
</reference>
<reference key="2">
    <citation type="journal article" date="2004" name="Nat. Genet.">
        <title>Complete sequencing and characterization of 21,243 full-length human cDNAs.</title>
        <authorList>
            <person name="Ota T."/>
            <person name="Suzuki Y."/>
            <person name="Nishikawa T."/>
            <person name="Otsuki T."/>
            <person name="Sugiyama T."/>
            <person name="Irie R."/>
            <person name="Wakamatsu A."/>
            <person name="Hayashi K."/>
            <person name="Sato H."/>
            <person name="Nagai K."/>
            <person name="Kimura K."/>
            <person name="Makita H."/>
            <person name="Sekine M."/>
            <person name="Obayashi M."/>
            <person name="Nishi T."/>
            <person name="Shibahara T."/>
            <person name="Tanaka T."/>
            <person name="Ishii S."/>
            <person name="Yamamoto J."/>
            <person name="Saito K."/>
            <person name="Kawai Y."/>
            <person name="Isono Y."/>
            <person name="Nakamura Y."/>
            <person name="Nagahari K."/>
            <person name="Murakami K."/>
            <person name="Yasuda T."/>
            <person name="Iwayanagi T."/>
            <person name="Wagatsuma M."/>
            <person name="Shiratori A."/>
            <person name="Sudo H."/>
            <person name="Hosoiri T."/>
            <person name="Kaku Y."/>
            <person name="Kodaira H."/>
            <person name="Kondo H."/>
            <person name="Sugawara M."/>
            <person name="Takahashi M."/>
            <person name="Kanda K."/>
            <person name="Yokoi T."/>
            <person name="Furuya T."/>
            <person name="Kikkawa E."/>
            <person name="Omura Y."/>
            <person name="Abe K."/>
            <person name="Kamihara K."/>
            <person name="Katsuta N."/>
            <person name="Sato K."/>
            <person name="Tanikawa M."/>
            <person name="Yamazaki M."/>
            <person name="Ninomiya K."/>
            <person name="Ishibashi T."/>
            <person name="Yamashita H."/>
            <person name="Murakawa K."/>
            <person name="Fujimori K."/>
            <person name="Tanai H."/>
            <person name="Kimata M."/>
            <person name="Watanabe M."/>
            <person name="Hiraoka S."/>
            <person name="Chiba Y."/>
            <person name="Ishida S."/>
            <person name="Ono Y."/>
            <person name="Takiguchi S."/>
            <person name="Watanabe S."/>
            <person name="Yosida M."/>
            <person name="Hotuta T."/>
            <person name="Kusano J."/>
            <person name="Kanehori K."/>
            <person name="Takahashi-Fujii A."/>
            <person name="Hara H."/>
            <person name="Tanase T.-O."/>
            <person name="Nomura Y."/>
            <person name="Togiya S."/>
            <person name="Komai F."/>
            <person name="Hara R."/>
            <person name="Takeuchi K."/>
            <person name="Arita M."/>
            <person name="Imose N."/>
            <person name="Musashino K."/>
            <person name="Yuuki H."/>
            <person name="Oshima A."/>
            <person name="Sasaki N."/>
            <person name="Aotsuka S."/>
            <person name="Yoshikawa Y."/>
            <person name="Matsunawa H."/>
            <person name="Ichihara T."/>
            <person name="Shiohata N."/>
            <person name="Sano S."/>
            <person name="Moriya S."/>
            <person name="Momiyama H."/>
            <person name="Satoh N."/>
            <person name="Takami S."/>
            <person name="Terashima Y."/>
            <person name="Suzuki O."/>
            <person name="Nakagawa S."/>
            <person name="Senoh A."/>
            <person name="Mizoguchi H."/>
            <person name="Goto Y."/>
            <person name="Shimizu F."/>
            <person name="Wakebe H."/>
            <person name="Hishigaki H."/>
            <person name="Watanabe T."/>
            <person name="Sugiyama A."/>
            <person name="Takemoto M."/>
            <person name="Kawakami B."/>
            <person name="Yamazaki M."/>
            <person name="Watanabe K."/>
            <person name="Kumagai A."/>
            <person name="Itakura S."/>
            <person name="Fukuzumi Y."/>
            <person name="Fujimori Y."/>
            <person name="Komiyama M."/>
            <person name="Tashiro H."/>
            <person name="Tanigami A."/>
            <person name="Fujiwara T."/>
            <person name="Ono T."/>
            <person name="Yamada K."/>
            <person name="Fujii Y."/>
            <person name="Ozaki K."/>
            <person name="Hirao M."/>
            <person name="Ohmori Y."/>
            <person name="Kawabata A."/>
            <person name="Hikiji T."/>
            <person name="Kobatake N."/>
            <person name="Inagaki H."/>
            <person name="Ikema Y."/>
            <person name="Okamoto S."/>
            <person name="Okitani R."/>
            <person name="Kawakami T."/>
            <person name="Noguchi S."/>
            <person name="Itoh T."/>
            <person name="Shigeta K."/>
            <person name="Senba T."/>
            <person name="Matsumura K."/>
            <person name="Nakajima Y."/>
            <person name="Mizuno T."/>
            <person name="Morinaga M."/>
            <person name="Sasaki M."/>
            <person name="Togashi T."/>
            <person name="Oyama M."/>
            <person name="Hata H."/>
            <person name="Watanabe M."/>
            <person name="Komatsu T."/>
            <person name="Mizushima-Sugano J."/>
            <person name="Satoh T."/>
            <person name="Shirai Y."/>
            <person name="Takahashi Y."/>
            <person name="Nakagawa K."/>
            <person name="Okumura K."/>
            <person name="Nagase T."/>
            <person name="Nomura N."/>
            <person name="Kikuchi H."/>
            <person name="Masuho Y."/>
            <person name="Yamashita R."/>
            <person name="Nakai K."/>
            <person name="Yada T."/>
            <person name="Nakamura Y."/>
            <person name="Ohara O."/>
            <person name="Isogai T."/>
            <person name="Sugano S."/>
        </authorList>
    </citation>
    <scope>NUCLEOTIDE SEQUENCE [LARGE SCALE MRNA]</scope>
</reference>
<reference key="3">
    <citation type="journal article" date="2005" name="Nature">
        <title>Generation and annotation of the DNA sequences of human chromosomes 2 and 4.</title>
        <authorList>
            <person name="Hillier L.W."/>
            <person name="Graves T.A."/>
            <person name="Fulton R.S."/>
            <person name="Fulton L.A."/>
            <person name="Pepin K.H."/>
            <person name="Minx P."/>
            <person name="Wagner-McPherson C."/>
            <person name="Layman D."/>
            <person name="Wylie K."/>
            <person name="Sekhon M."/>
            <person name="Becker M.C."/>
            <person name="Fewell G.A."/>
            <person name="Delehaunty K.D."/>
            <person name="Miner T.L."/>
            <person name="Nash W.E."/>
            <person name="Kremitzki C."/>
            <person name="Oddy L."/>
            <person name="Du H."/>
            <person name="Sun H."/>
            <person name="Bradshaw-Cordum H."/>
            <person name="Ali J."/>
            <person name="Carter J."/>
            <person name="Cordes M."/>
            <person name="Harris A."/>
            <person name="Isak A."/>
            <person name="van Brunt A."/>
            <person name="Nguyen C."/>
            <person name="Du F."/>
            <person name="Courtney L."/>
            <person name="Kalicki J."/>
            <person name="Ozersky P."/>
            <person name="Abbott S."/>
            <person name="Armstrong J."/>
            <person name="Belter E.A."/>
            <person name="Caruso L."/>
            <person name="Cedroni M."/>
            <person name="Cotton M."/>
            <person name="Davidson T."/>
            <person name="Desai A."/>
            <person name="Elliott G."/>
            <person name="Erb T."/>
            <person name="Fronick C."/>
            <person name="Gaige T."/>
            <person name="Haakenson W."/>
            <person name="Haglund K."/>
            <person name="Holmes A."/>
            <person name="Harkins R."/>
            <person name="Kim K."/>
            <person name="Kruchowski S.S."/>
            <person name="Strong C.M."/>
            <person name="Grewal N."/>
            <person name="Goyea E."/>
            <person name="Hou S."/>
            <person name="Levy A."/>
            <person name="Martinka S."/>
            <person name="Mead K."/>
            <person name="McLellan M.D."/>
            <person name="Meyer R."/>
            <person name="Randall-Maher J."/>
            <person name="Tomlinson C."/>
            <person name="Dauphin-Kohlberg S."/>
            <person name="Kozlowicz-Reilly A."/>
            <person name="Shah N."/>
            <person name="Swearengen-Shahid S."/>
            <person name="Snider J."/>
            <person name="Strong J.T."/>
            <person name="Thompson J."/>
            <person name="Yoakum M."/>
            <person name="Leonard S."/>
            <person name="Pearman C."/>
            <person name="Trani L."/>
            <person name="Radionenko M."/>
            <person name="Waligorski J.E."/>
            <person name="Wang C."/>
            <person name="Rock S.M."/>
            <person name="Tin-Wollam A.-M."/>
            <person name="Maupin R."/>
            <person name="Latreille P."/>
            <person name="Wendl M.C."/>
            <person name="Yang S.-P."/>
            <person name="Pohl C."/>
            <person name="Wallis J.W."/>
            <person name="Spieth J."/>
            <person name="Bieri T.A."/>
            <person name="Berkowicz N."/>
            <person name="Nelson J.O."/>
            <person name="Osborne J."/>
            <person name="Ding L."/>
            <person name="Meyer R."/>
            <person name="Sabo A."/>
            <person name="Shotland Y."/>
            <person name="Sinha P."/>
            <person name="Wohldmann P.E."/>
            <person name="Cook L.L."/>
            <person name="Hickenbotham M.T."/>
            <person name="Eldred J."/>
            <person name="Williams D."/>
            <person name="Jones T.A."/>
            <person name="She X."/>
            <person name="Ciccarelli F.D."/>
            <person name="Izaurralde E."/>
            <person name="Taylor J."/>
            <person name="Schmutz J."/>
            <person name="Myers R.M."/>
            <person name="Cox D.R."/>
            <person name="Huang X."/>
            <person name="McPherson J.D."/>
            <person name="Mardis E.R."/>
            <person name="Clifton S.W."/>
            <person name="Warren W.C."/>
            <person name="Chinwalla A.T."/>
            <person name="Eddy S.R."/>
            <person name="Marra M.A."/>
            <person name="Ovcharenko I."/>
            <person name="Furey T.S."/>
            <person name="Miller W."/>
            <person name="Eichler E.E."/>
            <person name="Bork P."/>
            <person name="Suyama M."/>
            <person name="Torrents D."/>
            <person name="Waterston R.H."/>
            <person name="Wilson R.K."/>
        </authorList>
    </citation>
    <scope>NUCLEOTIDE SEQUENCE [LARGE SCALE GENOMIC DNA]</scope>
</reference>
<reference key="4">
    <citation type="submission" date="2005-07" db="EMBL/GenBank/DDBJ databases">
        <authorList>
            <person name="Mural R.J."/>
            <person name="Istrail S."/>
            <person name="Sutton G.G."/>
            <person name="Florea L."/>
            <person name="Halpern A.L."/>
            <person name="Mobarry C.M."/>
            <person name="Lippert R."/>
            <person name="Walenz B."/>
            <person name="Shatkay H."/>
            <person name="Dew I."/>
            <person name="Miller J.R."/>
            <person name="Flanigan M.J."/>
            <person name="Edwards N.J."/>
            <person name="Bolanos R."/>
            <person name="Fasulo D."/>
            <person name="Halldorsson B.V."/>
            <person name="Hannenhalli S."/>
            <person name="Turner R."/>
            <person name="Yooseph S."/>
            <person name="Lu F."/>
            <person name="Nusskern D.R."/>
            <person name="Shue B.C."/>
            <person name="Zheng X.H."/>
            <person name="Zhong F."/>
            <person name="Delcher A.L."/>
            <person name="Huson D.H."/>
            <person name="Kravitz S.A."/>
            <person name="Mouchard L."/>
            <person name="Reinert K."/>
            <person name="Remington K.A."/>
            <person name="Clark A.G."/>
            <person name="Waterman M.S."/>
            <person name="Eichler E.E."/>
            <person name="Adams M.D."/>
            <person name="Hunkapiller M.W."/>
            <person name="Myers E.W."/>
            <person name="Venter J.C."/>
        </authorList>
    </citation>
    <scope>NUCLEOTIDE SEQUENCE [LARGE SCALE GENOMIC DNA]</scope>
</reference>
<reference key="5">
    <citation type="journal article" date="2004" name="Genome Res.">
        <title>The status, quality, and expansion of the NIH full-length cDNA project: the Mammalian Gene Collection (MGC).</title>
        <authorList>
            <consortium name="The MGC Project Team"/>
        </authorList>
    </citation>
    <scope>NUCLEOTIDE SEQUENCE [LARGE SCALE MRNA]</scope>
    <source>
        <tissue>Brain</tissue>
    </source>
</reference>
<reference key="6">
    <citation type="journal article" date="1995" name="Genomics">
        <title>Mapping of the alpha 4 subunit gene (GABRA4) to human chromosome 4 defines an alpha 2-alpha 4-beta 1-gamma 1 gene cluster: further evidence that modern GABAA receptor gene clusters are derived from an ancestral cluster.</title>
        <authorList>
            <person name="McLean P.J."/>
            <person name="Farb D.H."/>
            <person name="Russek S.J."/>
        </authorList>
    </citation>
    <scope>NUCLEOTIDE SEQUENCE [GENOMIC DNA] OF 1-57</scope>
</reference>
<reference evidence="11 12 13 14 15" key="7">
    <citation type="journal article" date="2022" name="Nature">
        <title>Differential assembly diversifies GABAA receptor structures and signalling.</title>
        <authorList>
            <person name="Sente A."/>
            <person name="Desai R."/>
            <person name="Naydenova K."/>
            <person name="Malinauskas T."/>
            <person name="Jounaidi Y."/>
            <person name="Miehling J."/>
            <person name="Zhou X."/>
            <person name="Masiulis S."/>
            <person name="Hardwick S.W."/>
            <person name="Chirgadze D.Y."/>
            <person name="Miller K.W."/>
            <person name="Aricescu A.R."/>
        </authorList>
    </citation>
    <scope>STRUCTURE BY ELECTRON MICROSCOPY (2.50 ANGSTROMS)</scope>
    <scope>FUNCTION</scope>
    <scope>TRANSPORTER ACTIVITY</scope>
    <scope>SUBUNIT</scope>
    <scope>INTERACTION WITH GABRB3 AND GABRD</scope>
    <scope>ACTIVITY REGULATION</scope>
    <scope>SUBCELLULAR LOCATION</scope>
    <scope>DOMAIN</scope>
    <scope>DISULFIDE BOND</scope>
    <scope>GLYCOSYLATION AT ASN-144 AND ASN-157</scope>
</reference>
<reference key="8">
    <citation type="journal article" date="2006" name="Science">
        <title>The consensus coding sequences of human breast and colorectal cancers.</title>
        <authorList>
            <person name="Sjoeblom T."/>
            <person name="Jones S."/>
            <person name="Wood L.D."/>
            <person name="Parsons D.W."/>
            <person name="Lin J."/>
            <person name="Barber T.D."/>
            <person name="Mandelker D."/>
            <person name="Leary R.J."/>
            <person name="Ptak J."/>
            <person name="Silliman N."/>
            <person name="Szabo S."/>
            <person name="Buckhaults P."/>
            <person name="Farrell C."/>
            <person name="Meeh P."/>
            <person name="Markowitz S.D."/>
            <person name="Willis J."/>
            <person name="Dawson D."/>
            <person name="Willson J.K.V."/>
            <person name="Gazdar A.F."/>
            <person name="Hartigan J."/>
            <person name="Wu L."/>
            <person name="Liu C."/>
            <person name="Parmigiani G."/>
            <person name="Park B.H."/>
            <person name="Bachman K.E."/>
            <person name="Papadopoulos N."/>
            <person name="Vogelstein B."/>
            <person name="Kinzler K.W."/>
            <person name="Velculescu V.E."/>
        </authorList>
    </citation>
    <scope>VARIANT [LARGE SCALE ANALYSIS] ARG-516</scope>
</reference>
<accession>P48169</accession>
<accession>Q8IYR7</accession>
<organism>
    <name type="scientific">Homo sapiens</name>
    <name type="common">Human</name>
    <dbReference type="NCBI Taxonomy" id="9606"/>
    <lineage>
        <taxon>Eukaryota</taxon>
        <taxon>Metazoa</taxon>
        <taxon>Chordata</taxon>
        <taxon>Craniata</taxon>
        <taxon>Vertebrata</taxon>
        <taxon>Euteleostomi</taxon>
        <taxon>Mammalia</taxon>
        <taxon>Eutheria</taxon>
        <taxon>Euarchontoglires</taxon>
        <taxon>Primates</taxon>
        <taxon>Haplorrhini</taxon>
        <taxon>Catarrhini</taxon>
        <taxon>Hominidae</taxon>
        <taxon>Homo</taxon>
    </lineage>
</organism>
<keyword id="KW-0002">3D-structure</keyword>
<keyword id="KW-1003">Cell membrane</keyword>
<keyword id="KW-0868">Chloride</keyword>
<keyword id="KW-0869">Chloride channel</keyword>
<keyword id="KW-1015">Disulfide bond</keyword>
<keyword id="KW-0325">Glycoprotein</keyword>
<keyword id="KW-0407">Ion channel</keyword>
<keyword id="KW-0406">Ion transport</keyword>
<keyword id="KW-1071">Ligand-gated ion channel</keyword>
<keyword id="KW-0472">Membrane</keyword>
<keyword id="KW-0628">Postsynaptic cell membrane</keyword>
<keyword id="KW-1267">Proteomics identification</keyword>
<keyword id="KW-0675">Receptor</keyword>
<keyword id="KW-1185">Reference proteome</keyword>
<keyword id="KW-0732">Signal</keyword>
<keyword id="KW-0770">Synapse</keyword>
<keyword id="KW-0812">Transmembrane</keyword>
<keyword id="KW-1133">Transmembrane helix</keyword>
<keyword id="KW-0813">Transport</keyword>
<name>GBRA4_HUMAN</name>
<feature type="signal peptide" evidence="3">
    <location>
        <begin position="1"/>
        <end position="35"/>
    </location>
</feature>
<feature type="chain" id="PRO_0000000441" description="Gamma-aminobutyric acid receptor subunit alpha-4">
    <location>
        <begin position="36"/>
        <end position="554"/>
    </location>
</feature>
<feature type="topological domain" description="Extracellular" evidence="9">
    <location>
        <begin position="36"/>
        <end position="259"/>
    </location>
</feature>
<feature type="transmembrane region" description="Helical" evidence="6 11">
    <location>
        <begin position="260"/>
        <end position="280"/>
    </location>
</feature>
<feature type="topological domain" description="Cytoplasmic" evidence="9">
    <location>
        <begin position="281"/>
        <end position="284"/>
    </location>
</feature>
<feature type="transmembrane region" description="Helical" evidence="6 11">
    <location>
        <begin position="285"/>
        <end position="305"/>
    </location>
</feature>
<feature type="topological domain" description="Extracellular" evidence="9">
    <location>
        <begin position="306"/>
        <end position="318"/>
    </location>
</feature>
<feature type="transmembrane region" description="Helical" evidence="6 11">
    <location>
        <begin position="319"/>
        <end position="341"/>
    </location>
</feature>
<feature type="topological domain" description="Cytoplasmic" evidence="9">
    <location>
        <begin position="342"/>
        <end position="517"/>
    </location>
</feature>
<feature type="transmembrane region" description="Helical" evidence="6 11">
    <location>
        <begin position="518"/>
        <end position="540"/>
    </location>
</feature>
<feature type="topological domain" description="Extracellular" evidence="9">
    <location>
        <begin position="541"/>
        <end position="554"/>
    </location>
</feature>
<feature type="region of interest" description="Disordered" evidence="4">
    <location>
        <begin position="350"/>
        <end position="381"/>
    </location>
</feature>
<feature type="region of interest" description="Disordered" evidence="4">
    <location>
        <begin position="397"/>
        <end position="435"/>
    </location>
</feature>
<feature type="region of interest" description="Disordered" evidence="4">
    <location>
        <begin position="452"/>
        <end position="471"/>
    </location>
</feature>
<feature type="region of interest" description="Disordered" evidence="4">
    <location>
        <begin position="495"/>
        <end position="515"/>
    </location>
</feature>
<feature type="compositionally biased region" description="Low complexity" evidence="4">
    <location>
        <begin position="410"/>
        <end position="422"/>
    </location>
</feature>
<feature type="compositionally biased region" description="Pro residues" evidence="4">
    <location>
        <begin position="502"/>
        <end position="511"/>
    </location>
</feature>
<feature type="binding site" evidence="6 12">
    <location>
        <position position="100"/>
    </location>
    <ligand>
        <name>4-aminobutanoate</name>
        <dbReference type="ChEBI" id="CHEBI:59888"/>
        <note>ligand shared with the neighboring beta subunit</note>
    </ligand>
</feature>
<feature type="binding site" evidence="6 12">
    <location>
        <position position="163"/>
    </location>
    <ligand>
        <name>4-aminobutanoate</name>
        <dbReference type="ChEBI" id="CHEBI:59888"/>
        <note>ligand shared with the neighboring beta subunit</note>
    </ligand>
</feature>
<feature type="glycosylation site" description="N-linked (GlcNAc...) asparagine" evidence="3">
    <location>
        <position position="47"/>
    </location>
</feature>
<feature type="glycosylation site" description="N-linked (GlcNAc...) asparagine" evidence="6 12">
    <location>
        <position position="144"/>
    </location>
</feature>
<feature type="glycosylation site" description="N-linked (GlcNAc...) asparagine" evidence="6 12">
    <location>
        <position position="157"/>
    </location>
</feature>
<feature type="disulfide bond" evidence="6 12">
    <location>
        <begin position="172"/>
        <end position="186"/>
    </location>
</feature>
<feature type="sequence variant" id="VAR_046552" description="In dbSNP:rs16859837.">
    <original>A</original>
    <variation>T</variation>
    <location>
        <position position="19"/>
    </location>
</feature>
<feature type="sequence variant" id="VAR_046553" description="In dbSNP:rs2229940.">
    <original>L</original>
    <variation>M</variation>
    <location>
        <position position="26"/>
    </location>
</feature>
<feature type="sequence variant" id="VAR_036032" description="In a breast cancer sample; somatic mutation." evidence="5">
    <original>S</original>
    <variation>R</variation>
    <location>
        <position position="516"/>
    </location>
</feature>
<feature type="sequence conflict" description="In Ref. 1; AAB52519." evidence="9" ref="1">
    <original>A</original>
    <variation>L</variation>
    <location>
        <position position="316"/>
    </location>
</feature>
<feature type="sequence conflict" description="In Ref. 1; AAB52519." evidence="9" ref="1">
    <original>N</original>
    <variation>D</variation>
    <location>
        <position position="379"/>
    </location>
</feature>
<feature type="sequence conflict" description="In Ref. 1; AAB52519." evidence="9" ref="1">
    <original>Y</original>
    <variation>H</variation>
    <location>
        <position position="463"/>
    </location>
</feature>
<feature type="helix" evidence="16">
    <location>
        <begin position="49"/>
        <end position="56"/>
    </location>
</feature>
<feature type="turn" evidence="16">
    <location>
        <begin position="65"/>
        <end position="68"/>
    </location>
</feature>
<feature type="strand" evidence="16">
    <location>
        <begin position="72"/>
        <end position="87"/>
    </location>
</feature>
<feature type="turn" evidence="16">
    <location>
        <begin position="88"/>
        <end position="91"/>
    </location>
</feature>
<feature type="strand" evidence="16">
    <location>
        <begin position="92"/>
        <end position="104"/>
    </location>
</feature>
<feature type="helix" evidence="16">
    <location>
        <begin position="106"/>
        <end position="108"/>
    </location>
</feature>
<feature type="strand" evidence="16">
    <location>
        <begin position="113"/>
        <end position="119"/>
    </location>
</feature>
<feature type="helix" evidence="16">
    <location>
        <begin position="121"/>
        <end position="126"/>
    </location>
</feature>
<feature type="strand" evidence="16">
    <location>
        <begin position="132"/>
        <end position="134"/>
    </location>
</feature>
<feature type="strand" evidence="16">
    <location>
        <begin position="137"/>
        <end position="142"/>
    </location>
</feature>
<feature type="strand" evidence="16">
    <location>
        <begin position="145"/>
        <end position="147"/>
    </location>
</feature>
<feature type="strand" evidence="16">
    <location>
        <begin position="150"/>
        <end position="155"/>
    </location>
</feature>
<feature type="strand" evidence="16">
    <location>
        <begin position="158"/>
        <end position="171"/>
    </location>
</feature>
<feature type="helix" evidence="16">
    <location>
        <begin position="176"/>
        <end position="178"/>
    </location>
</feature>
<feature type="strand" evidence="16">
    <location>
        <begin position="183"/>
        <end position="194"/>
    </location>
</feature>
<feature type="turn" evidence="16">
    <location>
        <begin position="197"/>
        <end position="199"/>
    </location>
</feature>
<feature type="strand" evidence="16">
    <location>
        <begin position="200"/>
        <end position="206"/>
    </location>
</feature>
<feature type="turn" evidence="16">
    <location>
        <begin position="208"/>
        <end position="210"/>
    </location>
</feature>
<feature type="strand" evidence="16">
    <location>
        <begin position="211"/>
        <end position="213"/>
    </location>
</feature>
<feature type="helix" evidence="16">
    <location>
        <begin position="216"/>
        <end position="218"/>
    </location>
</feature>
<feature type="strand" evidence="16">
    <location>
        <begin position="222"/>
        <end position="237"/>
    </location>
</feature>
<feature type="strand" evidence="16">
    <location>
        <begin position="242"/>
        <end position="254"/>
    </location>
</feature>
<feature type="helix" evidence="16">
    <location>
        <begin position="257"/>
        <end position="262"/>
    </location>
</feature>
<feature type="helix" evidence="16">
    <location>
        <begin position="264"/>
        <end position="276"/>
    </location>
</feature>
<feature type="helix" evidence="16">
    <location>
        <begin position="277"/>
        <end position="279"/>
    </location>
</feature>
<feature type="helix" evidence="16">
    <location>
        <begin position="285"/>
        <end position="309"/>
    </location>
</feature>
<feature type="helix" evidence="16">
    <location>
        <begin position="318"/>
        <end position="348"/>
    </location>
</feature>
<feature type="helix" evidence="16">
    <location>
        <begin position="517"/>
        <end position="543"/>
    </location>
</feature>
<evidence type="ECO:0000250" key="1">
    <source>
        <dbReference type="UniProtKB" id="P14867"/>
    </source>
</evidence>
<evidence type="ECO:0000250" key="2">
    <source>
        <dbReference type="UniProtKB" id="Q9D6F4"/>
    </source>
</evidence>
<evidence type="ECO:0000255" key="3"/>
<evidence type="ECO:0000256" key="4">
    <source>
        <dbReference type="SAM" id="MobiDB-lite"/>
    </source>
</evidence>
<evidence type="ECO:0000269" key="5">
    <source>
    </source>
</evidence>
<evidence type="ECO:0000269" key="6">
    <source>
    </source>
</evidence>
<evidence type="ECO:0000269" key="7">
    <source>
    </source>
</evidence>
<evidence type="ECO:0000303" key="8">
    <source>
    </source>
</evidence>
<evidence type="ECO:0000305" key="9"/>
<evidence type="ECO:0000312" key="10">
    <source>
        <dbReference type="HGNC" id="HGNC:4078"/>
    </source>
</evidence>
<evidence type="ECO:0007744" key="11">
    <source>
        <dbReference type="PDB" id="7QN5"/>
    </source>
</evidence>
<evidence type="ECO:0007744" key="12">
    <source>
        <dbReference type="PDB" id="7QN7"/>
    </source>
</evidence>
<evidence type="ECO:0007744" key="13">
    <source>
        <dbReference type="PDB" id="7QN9"/>
    </source>
</evidence>
<evidence type="ECO:0007744" key="14">
    <source>
        <dbReference type="PDB" id="7QNA"/>
    </source>
</evidence>
<evidence type="ECO:0007744" key="15">
    <source>
        <dbReference type="PDB" id="7QNC"/>
    </source>
</evidence>
<evidence type="ECO:0007829" key="16">
    <source>
        <dbReference type="PDB" id="7QN5"/>
    </source>
</evidence>
<comment type="function">
    <text evidence="2 6">Alpha subunit of the heteropentameric ligand-gated chloride channel gated by gamma-aminobutyric acid (GABA), a major inhibitory neurotransmitter in the brain (PubMed:35355020). GABA-gated chloride channels, also named GABA(A) receptors (GABAAR), consist of five subunits arranged around a central pore and contain GABA active binding site(s) located at the alpha and beta subunit interface(s) (PubMed:35355020). When activated by GABA, GABAARs selectively allow the flow of chloride anions across the cell membrane down their electrochemical gradient (PubMed:35355020). GABAARs containing alpha-4 are predominantly extrasynaptic, contributing to tonic inhibition in dentate granule cells and thalamic relay neurons (By similarity). Extrasynaptic alpha-4-containing GABAARs control levels of excitability and network activity (By similarity). GABAAR containing alpha-4-beta-3-delta subunits can simultaneously bind GABA and histamine where histamine binds at the interface of two neighboring beta subunits, which may be involved in the regulation of sleep and wakefulness (PubMed:35355020).</text>
</comment>
<comment type="catalytic activity">
    <reaction evidence="6">
        <text>chloride(in) = chloride(out)</text>
        <dbReference type="Rhea" id="RHEA:29823"/>
        <dbReference type="ChEBI" id="CHEBI:17996"/>
    </reaction>
</comment>
<comment type="activity regulation">
    <text evidence="6">Potentiated by histamine.</text>
</comment>
<comment type="subunit">
    <text evidence="6">Heteropentamer, formed by a combination of alpha (GABRA1-6), beta (GABRB1-3), gamma (GABRG1-3), delta (GABRD), epsilon (GABRE), rho (GABRR1-3), pi (GABRP) and theta (GABRQ) chains, each subunit exhibiting distinct physiological and pharmacological properties.</text>
</comment>
<comment type="subcellular location">
    <subcellularLocation>
        <location evidence="2">Cell membrane</location>
        <topology evidence="6 11">Multi-pass membrane protein</topology>
    </subcellularLocation>
    <subcellularLocation>
        <location>Postsynaptic cell membrane</location>
        <topology evidence="6 11">Multi-pass membrane protein</topology>
    </subcellularLocation>
</comment>
<comment type="tissue specificity">
    <text evidence="2">Expressed in the brain.</text>
</comment>
<comment type="induction">
    <text evidence="7">The alpha-4 beta-2 gamma-2L receptor is not repressed by diazepam.</text>
</comment>
<comment type="domain">
    <text evidence="6">The GABA-binding pockets are located at the interface between neighboring alpha and beta subunits.</text>
</comment>
<comment type="domain">
    <text evidence="1">GABAARs subunits share a common topological structure: a peptide sequence made up of a long extracellular N-terminal, four transmembrane domains, intracellular or cytoplasmic domain located between the third and the fourth transmembrane domains.</text>
</comment>
<comment type="similarity">
    <text evidence="9">Belongs to the ligand-gated ion channel (TC 1.A.9) family. Gamma-aminobutyric acid receptor (TC 1.A.9.5) subfamily. GABRA4 sub-subfamily.</text>
</comment>
<comment type="online information" name="Protein Spotlight">
    <link uri="https://www.proteinspotlight.org/back_issues/056"/>
    <text>Forbidden fruit - Issue 56 of March 2005</text>
</comment>
<sequence length="554" mass="61623">MVSAKKVPAIALSAGVSFALLRFLCLAVCLNESPGQNQKEEKLCTENFTRILDSLLDGYDNRLRPGFGGPVTEVKTDIYVTSFGPVSDVEMEYTMDVFFRQTWIDKRLKYDGPIEILRLNNMMVTKVWTPDTFFRNGKKSVSHNMTAPNKLFRIMRNGTILYTMRLTISAECPMRLVDFPMDGHACPLKFGSYAYPKSEMIYTWTKGPEKSVEVPKESSSLVQYDLIGQTVSSETIKSITGEYIVMTVYFHLRRKMGYFMIQTYIPCIMTVILSQVSFWINKESVPARTVFGITTVLTMTTLSISARHSLPKVSYATAMDWFIAVCFAFVFSALIEFAAVNYFTNIQMEKAKRKTSKPPQEVPAAPVQREKHPEAPLQNTNANLNMRKRTNALVHSESDVGNRTEVGNHSSKSSTVVQESSKGTPRSYLASSPNPFSRANAAETISAARALPSASPTSIRTGYMPRKASVGSASTRHVFGSRLQRIKTTVNTIGATGKLSATPPPSAPPPSGSGTSKIDKYARILFPVTFGAFNMVYWVVYLSKDTMEKSESLM</sequence>
<dbReference type="EMBL" id="U30461">
    <property type="protein sequence ID" value="AAB52519.1"/>
    <property type="molecule type" value="mRNA"/>
</dbReference>
<dbReference type="EMBL" id="AK090780">
    <property type="protein sequence ID" value="BAG52228.1"/>
    <property type="molecule type" value="mRNA"/>
</dbReference>
<dbReference type="EMBL" id="AC107383">
    <property type="status" value="NOT_ANNOTATED_CDS"/>
    <property type="molecule type" value="Genomic_DNA"/>
</dbReference>
<dbReference type="EMBL" id="CH471069">
    <property type="protein sequence ID" value="EAW93029.1"/>
    <property type="molecule type" value="Genomic_DNA"/>
</dbReference>
<dbReference type="EMBL" id="BC035055">
    <property type="protein sequence ID" value="AAH35055.1"/>
    <property type="molecule type" value="mRNA"/>
</dbReference>
<dbReference type="EMBL" id="U20166">
    <property type="protein sequence ID" value="AAA74743.1"/>
    <property type="molecule type" value="Genomic_DNA"/>
</dbReference>
<dbReference type="CCDS" id="CCDS3473.1"/>
<dbReference type="PIR" id="G01928">
    <property type="entry name" value="G01928"/>
</dbReference>
<dbReference type="RefSeq" id="NP_000800.2">
    <property type="nucleotide sequence ID" value="NM_000809.3"/>
</dbReference>
<dbReference type="RefSeq" id="NP_001191195.1">
    <property type="nucleotide sequence ID" value="NM_001204266.1"/>
</dbReference>
<dbReference type="RefSeq" id="NP_001191196.1">
    <property type="nucleotide sequence ID" value="NM_001204267.1"/>
</dbReference>
<dbReference type="PDB" id="7QN5">
    <property type="method" value="EM"/>
    <property type="resolution" value="2.50 A"/>
    <property type="chains" value="A=1-554"/>
</dbReference>
<dbReference type="PDB" id="7QN7">
    <property type="method" value="EM"/>
    <property type="resolution" value="3.00 A"/>
    <property type="chains" value="A=1-554"/>
</dbReference>
<dbReference type="PDB" id="7QN9">
    <property type="method" value="EM"/>
    <property type="resolution" value="2.90 A"/>
    <property type="chains" value="A=1-554"/>
</dbReference>
<dbReference type="PDB" id="7QNA">
    <property type="method" value="EM"/>
    <property type="resolution" value="3.00 A"/>
    <property type="chains" value="A=1-554"/>
</dbReference>
<dbReference type="PDB" id="7QNC">
    <property type="method" value="EM"/>
    <property type="resolution" value="2.90 A"/>
    <property type="chains" value="A=1-554"/>
</dbReference>
<dbReference type="PDBsum" id="7QN5"/>
<dbReference type="PDBsum" id="7QN7"/>
<dbReference type="PDBsum" id="7QN9"/>
<dbReference type="PDBsum" id="7QNA"/>
<dbReference type="PDBsum" id="7QNC"/>
<dbReference type="EMDB" id="EMD-14067"/>
<dbReference type="EMDB" id="EMD-14069"/>
<dbReference type="EMDB" id="EMD-14071"/>
<dbReference type="EMDB" id="EMD-14072"/>
<dbReference type="EMDB" id="EMD-14074"/>
<dbReference type="SMR" id="P48169"/>
<dbReference type="BioGRID" id="108831">
    <property type="interactions" value="11"/>
</dbReference>
<dbReference type="ComplexPortal" id="CPX-2953">
    <property type="entry name" value="GABA-A receptor, alpha4-beta2-delta"/>
</dbReference>
<dbReference type="ComplexPortal" id="CPX-2954">
    <property type="entry name" value="GABA-A receptor, alpha4-beta3-delta"/>
</dbReference>
<dbReference type="ComplexPortal" id="CPX-8571">
    <property type="entry name" value="GABA-A receptor, alpha4-beta3-gamma2"/>
</dbReference>
<dbReference type="ComplexPortal" id="CPX-8574">
    <property type="entry name" value="GABA-A receptor, alpha4-beta2-gamma2"/>
</dbReference>
<dbReference type="ComplexPortal" id="CPX-8723">
    <property type="entry name" value="GABA-A receptor, alpha4-beta1-gamma2 complex"/>
</dbReference>
<dbReference type="FunCoup" id="P48169">
    <property type="interactions" value="616"/>
</dbReference>
<dbReference type="IntAct" id="P48169">
    <property type="interactions" value="4"/>
</dbReference>
<dbReference type="STRING" id="9606.ENSP00000264318"/>
<dbReference type="BindingDB" id="P48169"/>
<dbReference type="ChEMBL" id="CHEMBL2472"/>
<dbReference type="DrugBank" id="DB12537">
    <property type="generic name" value="1,2-Benzodiazepine"/>
</dbReference>
<dbReference type="DrugBank" id="DB00546">
    <property type="generic name" value="Adinazolam"/>
</dbReference>
<dbReference type="DrugBank" id="DB00404">
    <property type="generic name" value="Alprazolam"/>
</dbReference>
<dbReference type="DrugBank" id="DB01351">
    <property type="generic name" value="Amobarbital"/>
</dbReference>
<dbReference type="DrugBank" id="DB00543">
    <property type="generic name" value="Amoxapine"/>
</dbReference>
<dbReference type="DrugBank" id="DB11901">
    <property type="generic name" value="Apalutamide"/>
</dbReference>
<dbReference type="DrugBank" id="DB01352">
    <property type="generic name" value="Aprobarbital"/>
</dbReference>
<dbReference type="DrugBank" id="DB01483">
    <property type="generic name" value="Barbital"/>
</dbReference>
<dbReference type="DrugBank" id="DB14719">
    <property type="generic name" value="Bentazepam"/>
</dbReference>
<dbReference type="DrugBank" id="DB11859">
    <property type="generic name" value="Brexanolone"/>
</dbReference>
<dbReference type="DrugBank" id="DB01558">
    <property type="generic name" value="Bromazepam"/>
</dbReference>
<dbReference type="DrugBank" id="DB09017">
    <property type="generic name" value="Brotizolam"/>
</dbReference>
<dbReference type="DrugBank" id="DB00237">
    <property type="generic name" value="Butabarbital"/>
</dbReference>
<dbReference type="DrugBank" id="DB00241">
    <property type="generic name" value="Butalbital"/>
</dbReference>
<dbReference type="DrugBank" id="DB01353">
    <property type="generic name" value="Butobarbital"/>
</dbReference>
<dbReference type="DrugBank" id="DB01489">
    <property type="generic name" value="Camazepam"/>
</dbReference>
<dbReference type="DrugBank" id="DB00475">
    <property type="generic name" value="Chlordiazepoxide"/>
</dbReference>
<dbReference type="DrugBank" id="DB14715">
    <property type="generic name" value="Cinazepam"/>
</dbReference>
<dbReference type="DrugBank" id="DB01594">
    <property type="generic name" value="Cinolazepam"/>
</dbReference>
<dbReference type="DrugBank" id="DB00349">
    <property type="generic name" value="Clobazam"/>
</dbReference>
<dbReference type="DrugBank" id="DB01068">
    <property type="generic name" value="Clonazepam"/>
</dbReference>
<dbReference type="DrugBank" id="DB00628">
    <property type="generic name" value="Clorazepic acid"/>
</dbReference>
<dbReference type="DrugBank" id="DB01559">
    <property type="generic name" value="Clotiazepam"/>
</dbReference>
<dbReference type="DrugBank" id="DB01553">
    <property type="generic name" value="Cloxazolam"/>
</dbReference>
<dbReference type="DrugBank" id="DB01511">
    <property type="generic name" value="Delorazepam"/>
</dbReference>
<dbReference type="DrugBank" id="DB01189">
    <property type="generic name" value="Desflurane"/>
</dbReference>
<dbReference type="DrugBank" id="DB00829">
    <property type="generic name" value="Diazepam"/>
</dbReference>
<dbReference type="DrugBank" id="DB01496">
    <property type="generic name" value="Dihydro-2-thioxo-5-((5-(2-(trifluoromethyl)phenyl)-2-furanyl)methyl)-4,6(1H,5H)-pyrimidinedione"/>
</dbReference>
<dbReference type="DrugBank" id="DB13837">
    <property type="generic name" value="Doxefazepam"/>
</dbReference>
<dbReference type="DrugBank" id="DB00228">
    <property type="generic name" value="Enflurane"/>
</dbReference>
<dbReference type="DrugBank" id="DB01215">
    <property type="generic name" value="Estazolam"/>
</dbReference>
<dbReference type="DrugBank" id="DB00402">
    <property type="generic name" value="Eszopiclone"/>
</dbReference>
<dbReference type="DrugBank" id="DB00898">
    <property type="generic name" value="Ethanol"/>
</dbReference>
<dbReference type="DrugBank" id="DB00189">
    <property type="generic name" value="Ethchlorvynol"/>
</dbReference>
<dbReference type="DrugBank" id="DB01545">
    <property type="generic name" value="Ethyl loflazepate"/>
</dbReference>
<dbReference type="DrugBank" id="DB09166">
    <property type="generic name" value="Etizolam"/>
</dbReference>
<dbReference type="DrugBank" id="DB00292">
    <property type="generic name" value="Etomidate"/>
</dbReference>
<dbReference type="DrugBank" id="DB01205">
    <property type="generic name" value="Flumazenil"/>
</dbReference>
<dbReference type="DrugBank" id="DB01544">
    <property type="generic name" value="Flunitrazepam"/>
</dbReference>
<dbReference type="DrugBank" id="DB00690">
    <property type="generic name" value="Flurazepam"/>
</dbReference>
<dbReference type="DrugBank" id="DB05087">
    <property type="generic name" value="Ganaxolone"/>
</dbReference>
<dbReference type="DrugBank" id="DB01437">
    <property type="generic name" value="Glutethimide"/>
</dbReference>
<dbReference type="DrugBank" id="DB00801">
    <property type="generic name" value="Halazepam"/>
</dbReference>
<dbReference type="DrugBank" id="DB01159">
    <property type="generic name" value="Halothane"/>
</dbReference>
<dbReference type="DrugBank" id="DB01354">
    <property type="generic name" value="Heptabarbital"/>
</dbReference>
<dbReference type="DrugBank" id="DB01355">
    <property type="generic name" value="Hexobarbital"/>
</dbReference>
<dbReference type="DrugBank" id="DB00753">
    <property type="generic name" value="Isoflurane"/>
</dbReference>
<dbReference type="DrugBank" id="DB01587">
    <property type="generic name" value="Ketazolam"/>
</dbReference>
<dbReference type="DrugBank" id="DB00555">
    <property type="generic name" value="Lamotrigine"/>
</dbReference>
<dbReference type="DrugBank" id="DB13643">
    <property type="generic name" value="Loprazolam"/>
</dbReference>
<dbReference type="DrugBank" id="DB00186">
    <property type="generic name" value="Lorazepam"/>
</dbReference>
<dbReference type="DrugBank" id="DB13872">
    <property type="generic name" value="Lormetazepam"/>
</dbReference>
<dbReference type="DrugBank" id="DB13437">
    <property type="generic name" value="Medazepam"/>
</dbReference>
<dbReference type="DrugBank" id="DB00603">
    <property type="generic name" value="Medroxyprogesterone acetate"/>
</dbReference>
<dbReference type="DrugBank" id="DB01043">
    <property type="generic name" value="Memantine"/>
</dbReference>
<dbReference type="DrugBank" id="DB00371">
    <property type="generic name" value="Meprobamate"/>
</dbReference>
<dbReference type="DrugBank" id="DB00463">
    <property type="generic name" value="Metharbital"/>
</dbReference>
<dbReference type="DrugBank" id="DB01028">
    <property type="generic name" value="Methoxyflurane"/>
</dbReference>
<dbReference type="DrugBank" id="DB00849">
    <property type="generic name" value="Methylphenobarbital"/>
</dbReference>
<dbReference type="DrugBank" id="DB01107">
    <property type="generic name" value="Methyprylon"/>
</dbReference>
<dbReference type="DrugBank" id="DB15489">
    <property type="generic name" value="Mexazolam"/>
</dbReference>
<dbReference type="DrugBank" id="DB00683">
    <property type="generic name" value="Midazolam"/>
</dbReference>
<dbReference type="DrugBank" id="DB01595">
    <property type="generic name" value="Nitrazepam"/>
</dbReference>
<dbReference type="DrugBank" id="DB14028">
    <property type="generic name" value="Nordazepam"/>
</dbReference>
<dbReference type="DrugBank" id="DB00842">
    <property type="generic name" value="Oxazepam"/>
</dbReference>
<dbReference type="DrugBank" id="DB14672">
    <property type="generic name" value="Oxazepam acetate"/>
</dbReference>
<dbReference type="DrugBank" id="DB00312">
    <property type="generic name" value="Pentobarbital"/>
</dbReference>
<dbReference type="DrugBank" id="DB00252">
    <property type="generic name" value="Phenytoin"/>
</dbReference>
<dbReference type="DrugBank" id="DB13335">
    <property type="generic name" value="Pinazepam"/>
</dbReference>
<dbReference type="DrugBank" id="DB01708">
    <property type="generic name" value="Prasterone"/>
</dbReference>
<dbReference type="DrugBank" id="DB01588">
    <property type="generic name" value="Prazepam"/>
</dbReference>
<dbReference type="DrugBank" id="DB00794">
    <property type="generic name" value="Primidone"/>
</dbReference>
<dbReference type="DrugBank" id="DB00818">
    <property type="generic name" value="Propofol"/>
</dbReference>
<dbReference type="DrugBank" id="DB01589">
    <property type="generic name" value="Quazepam"/>
</dbReference>
<dbReference type="DrugBank" id="DB12404">
    <property type="generic name" value="Remimazolam"/>
</dbReference>
<dbReference type="DrugBank" id="DB00418">
    <property type="generic name" value="Secobarbital"/>
</dbReference>
<dbReference type="DrugBank" id="DB01236">
    <property type="generic name" value="Sevoflurane"/>
</dbReference>
<dbReference type="DrugBank" id="DB09118">
    <property type="generic name" value="Stiripentol"/>
</dbReference>
<dbReference type="DrugBank" id="DB00306">
    <property type="generic name" value="Talbutal"/>
</dbReference>
<dbReference type="DrugBank" id="DB01956">
    <property type="generic name" value="Taurine"/>
</dbReference>
<dbReference type="DrugBank" id="DB00231">
    <property type="generic name" value="Temazepam"/>
</dbReference>
<dbReference type="DrugBank" id="DB11582">
    <property type="generic name" value="Thiocolchicoside"/>
</dbReference>
<dbReference type="DrugBank" id="DB00599">
    <property type="generic name" value="Thiopental"/>
</dbReference>
<dbReference type="DrugBank" id="DB00897">
    <property type="generic name" value="Triazolam"/>
</dbReference>
<dbReference type="DrugBank" id="DB15490">
    <property type="generic name" value="Zuranolone"/>
</dbReference>
<dbReference type="DrugCentral" id="P48169"/>
<dbReference type="GuidetoPHARMACOLOGY" id="407"/>
<dbReference type="TCDB" id="1.A.9.5.17">
    <property type="family name" value="the neurotransmitter receptor, cys loop, ligand-gated ion channel (lic) family"/>
</dbReference>
<dbReference type="GlyCosmos" id="P48169">
    <property type="glycosylation" value="3 sites, No reported glycans"/>
</dbReference>
<dbReference type="GlyGen" id="P48169">
    <property type="glycosylation" value="3 sites"/>
</dbReference>
<dbReference type="iPTMnet" id="P48169"/>
<dbReference type="PhosphoSitePlus" id="P48169"/>
<dbReference type="BioMuta" id="GABRA4"/>
<dbReference type="DMDM" id="206729865"/>
<dbReference type="MassIVE" id="P48169"/>
<dbReference type="PaxDb" id="9606-ENSP00000264318"/>
<dbReference type="PeptideAtlas" id="P48169"/>
<dbReference type="ProteomicsDB" id="55870"/>
<dbReference type="TopDownProteomics" id="P48169"/>
<dbReference type="Antibodypedia" id="12041">
    <property type="antibodies" value="420 antibodies from 38 providers"/>
</dbReference>
<dbReference type="DNASU" id="2557"/>
<dbReference type="Ensembl" id="ENST00000264318.4">
    <property type="protein sequence ID" value="ENSP00000264318.3"/>
    <property type="gene ID" value="ENSG00000109158.11"/>
</dbReference>
<dbReference type="GeneID" id="2557"/>
<dbReference type="KEGG" id="hsa:2557"/>
<dbReference type="MANE-Select" id="ENST00000264318.4">
    <property type="protein sequence ID" value="ENSP00000264318.3"/>
    <property type="RefSeq nucleotide sequence ID" value="NM_000809.4"/>
    <property type="RefSeq protein sequence ID" value="NP_000800.2"/>
</dbReference>
<dbReference type="AGR" id="HGNC:4078"/>
<dbReference type="CTD" id="2557"/>
<dbReference type="DisGeNET" id="2557"/>
<dbReference type="GeneCards" id="GABRA4"/>
<dbReference type="HGNC" id="HGNC:4078">
    <property type="gene designation" value="GABRA4"/>
</dbReference>
<dbReference type="HPA" id="ENSG00000109158">
    <property type="expression patterns" value="Group enriched (brain, heart muscle)"/>
</dbReference>
<dbReference type="MalaCards" id="GABRA4"/>
<dbReference type="MIM" id="137141">
    <property type="type" value="gene"/>
</dbReference>
<dbReference type="neXtProt" id="NX_P48169"/>
<dbReference type="OpenTargets" id="ENSG00000109158"/>
<dbReference type="PharmGKB" id="PA28492"/>
<dbReference type="VEuPathDB" id="HostDB:ENSG00000109158"/>
<dbReference type="eggNOG" id="KOG3642">
    <property type="taxonomic scope" value="Eukaryota"/>
</dbReference>
<dbReference type="GeneTree" id="ENSGT00940000159024"/>
<dbReference type="HOGENOM" id="CLU_010920_2_2_1"/>
<dbReference type="InParanoid" id="P48169"/>
<dbReference type="OMA" id="FFCLTTC"/>
<dbReference type="OrthoDB" id="203862at2759"/>
<dbReference type="PAN-GO" id="P48169">
    <property type="GO annotations" value="19 GO annotations based on evolutionary models"/>
</dbReference>
<dbReference type="PhylomeDB" id="P48169"/>
<dbReference type="TreeFam" id="TF315453"/>
<dbReference type="PathwayCommons" id="P48169"/>
<dbReference type="Reactome" id="R-HSA-977443">
    <property type="pathway name" value="GABA receptor activation"/>
</dbReference>
<dbReference type="SignaLink" id="P48169"/>
<dbReference type="SIGNOR" id="P48169"/>
<dbReference type="BioGRID-ORCS" id="2557">
    <property type="hits" value="7 hits in 1155 CRISPR screens"/>
</dbReference>
<dbReference type="CD-CODE" id="FB4E32DD">
    <property type="entry name" value="Presynaptic clusters and postsynaptic densities"/>
</dbReference>
<dbReference type="ChiTaRS" id="GABRA4">
    <property type="organism name" value="human"/>
</dbReference>
<dbReference type="GeneWiki" id="GABRA4"/>
<dbReference type="GenomeRNAi" id="2557"/>
<dbReference type="Pharos" id="P48169">
    <property type="development level" value="Tclin"/>
</dbReference>
<dbReference type="PRO" id="PR:P48169"/>
<dbReference type="Proteomes" id="UP000005640">
    <property type="component" value="Chromosome 4"/>
</dbReference>
<dbReference type="RNAct" id="P48169">
    <property type="molecule type" value="protein"/>
</dbReference>
<dbReference type="Bgee" id="ENSG00000109158">
    <property type="expression patterns" value="Expressed in postcentral gyrus and 92 other cell types or tissues"/>
</dbReference>
<dbReference type="ExpressionAtlas" id="P48169">
    <property type="expression patterns" value="baseline and differential"/>
</dbReference>
<dbReference type="GO" id="GO:0034707">
    <property type="term" value="C:chloride channel complex"/>
    <property type="evidence" value="ECO:0007669"/>
    <property type="project" value="UniProtKB-KW"/>
</dbReference>
<dbReference type="GO" id="GO:0032590">
    <property type="term" value="C:dendrite membrane"/>
    <property type="evidence" value="ECO:0000318"/>
    <property type="project" value="GO_Central"/>
</dbReference>
<dbReference type="GO" id="GO:1902711">
    <property type="term" value="C:GABA-A receptor complex"/>
    <property type="evidence" value="ECO:0000353"/>
    <property type="project" value="ComplexPortal"/>
</dbReference>
<dbReference type="GO" id="GO:0098982">
    <property type="term" value="C:GABA-ergic synapse"/>
    <property type="evidence" value="ECO:0007669"/>
    <property type="project" value="Ensembl"/>
</dbReference>
<dbReference type="GO" id="GO:0005886">
    <property type="term" value="C:plasma membrane"/>
    <property type="evidence" value="ECO:0000304"/>
    <property type="project" value="Reactome"/>
</dbReference>
<dbReference type="GO" id="GO:0098794">
    <property type="term" value="C:postsynapse"/>
    <property type="evidence" value="ECO:0000318"/>
    <property type="project" value="GO_Central"/>
</dbReference>
<dbReference type="GO" id="GO:0099634">
    <property type="term" value="C:postsynaptic specialization membrane"/>
    <property type="evidence" value="ECO:0007669"/>
    <property type="project" value="Ensembl"/>
</dbReference>
<dbReference type="GO" id="GO:0008503">
    <property type="term" value="F:benzodiazepine receptor activity"/>
    <property type="evidence" value="ECO:0000304"/>
    <property type="project" value="ProtInc"/>
</dbReference>
<dbReference type="GO" id="GO:0004890">
    <property type="term" value="F:GABA-A receptor activity"/>
    <property type="evidence" value="ECO:0007669"/>
    <property type="project" value="InterPro"/>
</dbReference>
<dbReference type="GO" id="GO:0022851">
    <property type="term" value="F:GABA-gated chloride ion channel activity"/>
    <property type="evidence" value="ECO:0000318"/>
    <property type="project" value="GO_Central"/>
</dbReference>
<dbReference type="GO" id="GO:1904315">
    <property type="term" value="F:transmitter-gated monoatomic ion channel activity involved in regulation of postsynaptic membrane potential"/>
    <property type="evidence" value="ECO:0007669"/>
    <property type="project" value="Ensembl"/>
</dbReference>
<dbReference type="GO" id="GO:0007417">
    <property type="term" value="P:central nervous system development"/>
    <property type="evidence" value="ECO:0007669"/>
    <property type="project" value="Ensembl"/>
</dbReference>
<dbReference type="GO" id="GO:1902476">
    <property type="term" value="P:chloride transmembrane transport"/>
    <property type="evidence" value="ECO:0000314"/>
    <property type="project" value="ComplexPortal"/>
</dbReference>
<dbReference type="GO" id="GO:0007214">
    <property type="term" value="P:gamma-aminobutyric acid signaling pathway"/>
    <property type="evidence" value="ECO:0000314"/>
    <property type="project" value="ComplexPortal"/>
</dbReference>
<dbReference type="GO" id="GO:1904862">
    <property type="term" value="P:inhibitory synapse assembly"/>
    <property type="evidence" value="ECO:0000318"/>
    <property type="project" value="GO_Central"/>
</dbReference>
<dbReference type="GO" id="GO:0051932">
    <property type="term" value="P:synaptic transmission, GABAergic"/>
    <property type="evidence" value="ECO:0000318"/>
    <property type="project" value="GO_Central"/>
</dbReference>
<dbReference type="CDD" id="cd19037">
    <property type="entry name" value="LGIC_ECD_GABAAR_A4"/>
    <property type="match status" value="1"/>
</dbReference>
<dbReference type="CDD" id="cd19052">
    <property type="entry name" value="LGIC_TM_GABAAR_alpha"/>
    <property type="match status" value="1"/>
</dbReference>
<dbReference type="FunFam" id="2.70.170.10:FF:000001">
    <property type="entry name" value="Gamma-aminobutyric acid A receptor subunit alpha-2"/>
    <property type="match status" value="1"/>
</dbReference>
<dbReference type="FunFam" id="1.20.58.390:FF:000002">
    <property type="entry name" value="Putative gamma-aminobutyric acid receptor subunit alpha-5"/>
    <property type="match status" value="1"/>
</dbReference>
<dbReference type="Gene3D" id="2.70.170.10">
    <property type="entry name" value="Neurotransmitter-gated ion-channel ligand-binding domain"/>
    <property type="match status" value="1"/>
</dbReference>
<dbReference type="Gene3D" id="1.20.58.390">
    <property type="entry name" value="Neurotransmitter-gated ion-channel transmembrane domain"/>
    <property type="match status" value="1"/>
</dbReference>
<dbReference type="InterPro" id="IPR006028">
    <property type="entry name" value="GABAA/Glycine_rcpt"/>
</dbReference>
<dbReference type="InterPro" id="IPR001390">
    <property type="entry name" value="GABAAa_rcpt"/>
</dbReference>
<dbReference type="InterPro" id="IPR005434">
    <property type="entry name" value="GABBAa4_rcpt"/>
</dbReference>
<dbReference type="InterPro" id="IPR047024">
    <property type="entry name" value="Gabra-1-6_TM"/>
</dbReference>
<dbReference type="InterPro" id="IPR006202">
    <property type="entry name" value="Neur_chan_lig-bd"/>
</dbReference>
<dbReference type="InterPro" id="IPR036734">
    <property type="entry name" value="Neur_chan_lig-bd_sf"/>
</dbReference>
<dbReference type="InterPro" id="IPR006201">
    <property type="entry name" value="Neur_channel"/>
</dbReference>
<dbReference type="InterPro" id="IPR036719">
    <property type="entry name" value="Neuro-gated_channel_TM_sf"/>
</dbReference>
<dbReference type="InterPro" id="IPR038050">
    <property type="entry name" value="Neuro_actylchol_rec"/>
</dbReference>
<dbReference type="InterPro" id="IPR006029">
    <property type="entry name" value="Neurotrans-gated_channel_TM"/>
</dbReference>
<dbReference type="InterPro" id="IPR018000">
    <property type="entry name" value="Neurotransmitter_ion_chnl_CS"/>
</dbReference>
<dbReference type="NCBIfam" id="TIGR00860">
    <property type="entry name" value="LIC"/>
    <property type="match status" value="1"/>
</dbReference>
<dbReference type="PANTHER" id="PTHR18945">
    <property type="entry name" value="NEUROTRANSMITTER GATED ION CHANNEL"/>
    <property type="match status" value="1"/>
</dbReference>
<dbReference type="Pfam" id="PF02931">
    <property type="entry name" value="Neur_chan_LBD"/>
    <property type="match status" value="1"/>
</dbReference>
<dbReference type="Pfam" id="PF02932">
    <property type="entry name" value="Neur_chan_memb"/>
    <property type="match status" value="1"/>
</dbReference>
<dbReference type="PRINTS" id="PR01079">
    <property type="entry name" value="GABAARALPHA"/>
</dbReference>
<dbReference type="PRINTS" id="PR01617">
    <property type="entry name" value="GABAARALPHA4"/>
</dbReference>
<dbReference type="PRINTS" id="PR00253">
    <property type="entry name" value="GABAARECEPTR"/>
</dbReference>
<dbReference type="PRINTS" id="PR00252">
    <property type="entry name" value="NRIONCHANNEL"/>
</dbReference>
<dbReference type="SUPFAM" id="SSF90112">
    <property type="entry name" value="Neurotransmitter-gated ion-channel transmembrane pore"/>
    <property type="match status" value="1"/>
</dbReference>
<dbReference type="SUPFAM" id="SSF63712">
    <property type="entry name" value="Nicotinic receptor ligand binding domain-like"/>
    <property type="match status" value="1"/>
</dbReference>
<dbReference type="PROSITE" id="PS00236">
    <property type="entry name" value="NEUROTR_ION_CHANNEL"/>
    <property type="match status" value="1"/>
</dbReference>